<sequence>MMPGQIPDPLVTAGSLPSVGPLAGFPATTLTEQLKLAELYRLGTVLSPLMLNRHAKRPFDAIKSEDDDDDERKKRRREKNKVAAARCRNRKKERTDFLQKESERLEMLNSDLKSQIEELKSERQQLIVMLNLHRPTCIVRTDSVKSDEHPLEPRED</sequence>
<name>JDP2_DANRE</name>
<organism>
    <name type="scientific">Danio rerio</name>
    <name type="common">Zebrafish</name>
    <name type="synonym">Brachydanio rerio</name>
    <dbReference type="NCBI Taxonomy" id="7955"/>
    <lineage>
        <taxon>Eukaryota</taxon>
        <taxon>Metazoa</taxon>
        <taxon>Chordata</taxon>
        <taxon>Craniata</taxon>
        <taxon>Vertebrata</taxon>
        <taxon>Euteleostomi</taxon>
        <taxon>Actinopterygii</taxon>
        <taxon>Neopterygii</taxon>
        <taxon>Teleostei</taxon>
        <taxon>Ostariophysi</taxon>
        <taxon>Cypriniformes</taxon>
        <taxon>Danionidae</taxon>
        <taxon>Danioninae</taxon>
        <taxon>Danio</taxon>
    </lineage>
</organism>
<keyword id="KW-0238">DNA-binding</keyword>
<keyword id="KW-0539">Nucleus</keyword>
<keyword id="KW-1185">Reference proteome</keyword>
<keyword id="KW-0678">Repressor</keyword>
<keyword id="KW-0804">Transcription</keyword>
<keyword id="KW-0805">Transcription regulation</keyword>
<protein>
    <recommendedName>
        <fullName>Jun dimerization protein 2</fullName>
    </recommendedName>
</protein>
<proteinExistence type="evidence at transcript level"/>
<feature type="chain" id="PRO_0000331133" description="Jun dimerization protein 2">
    <location>
        <begin position="1"/>
        <end position="156"/>
    </location>
</feature>
<feature type="domain" description="bZIP" evidence="2">
    <location>
        <begin position="70"/>
        <end position="133"/>
    </location>
</feature>
<feature type="region of interest" description="Disordered" evidence="3">
    <location>
        <begin position="56"/>
        <end position="95"/>
    </location>
</feature>
<feature type="region of interest" description="Basic motif" evidence="2">
    <location>
        <begin position="72"/>
        <end position="94"/>
    </location>
</feature>
<feature type="region of interest" description="Leucine-zipper" evidence="2">
    <location>
        <begin position="98"/>
        <end position="126"/>
    </location>
</feature>
<accession>Q6DGM8</accession>
<gene>
    <name type="primary">jdp2</name>
    <name type="ORF">si:ch211-153j24.2</name>
    <name type="ORF">zgc:92851</name>
</gene>
<reference key="1">
    <citation type="journal article" date="2013" name="Nature">
        <title>The zebrafish reference genome sequence and its relationship to the human genome.</title>
        <authorList>
            <person name="Howe K."/>
            <person name="Clark M.D."/>
            <person name="Torroja C.F."/>
            <person name="Torrance J."/>
            <person name="Berthelot C."/>
            <person name="Muffato M."/>
            <person name="Collins J.E."/>
            <person name="Humphray S."/>
            <person name="McLaren K."/>
            <person name="Matthews L."/>
            <person name="McLaren S."/>
            <person name="Sealy I."/>
            <person name="Caccamo M."/>
            <person name="Churcher C."/>
            <person name="Scott C."/>
            <person name="Barrett J.C."/>
            <person name="Koch R."/>
            <person name="Rauch G.J."/>
            <person name="White S."/>
            <person name="Chow W."/>
            <person name="Kilian B."/>
            <person name="Quintais L.T."/>
            <person name="Guerra-Assuncao J.A."/>
            <person name="Zhou Y."/>
            <person name="Gu Y."/>
            <person name="Yen J."/>
            <person name="Vogel J.H."/>
            <person name="Eyre T."/>
            <person name="Redmond S."/>
            <person name="Banerjee R."/>
            <person name="Chi J."/>
            <person name="Fu B."/>
            <person name="Langley E."/>
            <person name="Maguire S.F."/>
            <person name="Laird G.K."/>
            <person name="Lloyd D."/>
            <person name="Kenyon E."/>
            <person name="Donaldson S."/>
            <person name="Sehra H."/>
            <person name="Almeida-King J."/>
            <person name="Loveland J."/>
            <person name="Trevanion S."/>
            <person name="Jones M."/>
            <person name="Quail M."/>
            <person name="Willey D."/>
            <person name="Hunt A."/>
            <person name="Burton J."/>
            <person name="Sims S."/>
            <person name="McLay K."/>
            <person name="Plumb B."/>
            <person name="Davis J."/>
            <person name="Clee C."/>
            <person name="Oliver K."/>
            <person name="Clark R."/>
            <person name="Riddle C."/>
            <person name="Elliot D."/>
            <person name="Threadgold G."/>
            <person name="Harden G."/>
            <person name="Ware D."/>
            <person name="Begum S."/>
            <person name="Mortimore B."/>
            <person name="Kerry G."/>
            <person name="Heath P."/>
            <person name="Phillimore B."/>
            <person name="Tracey A."/>
            <person name="Corby N."/>
            <person name="Dunn M."/>
            <person name="Johnson C."/>
            <person name="Wood J."/>
            <person name="Clark S."/>
            <person name="Pelan S."/>
            <person name="Griffiths G."/>
            <person name="Smith M."/>
            <person name="Glithero R."/>
            <person name="Howden P."/>
            <person name="Barker N."/>
            <person name="Lloyd C."/>
            <person name="Stevens C."/>
            <person name="Harley J."/>
            <person name="Holt K."/>
            <person name="Panagiotidis G."/>
            <person name="Lovell J."/>
            <person name="Beasley H."/>
            <person name="Henderson C."/>
            <person name="Gordon D."/>
            <person name="Auger K."/>
            <person name="Wright D."/>
            <person name="Collins J."/>
            <person name="Raisen C."/>
            <person name="Dyer L."/>
            <person name="Leung K."/>
            <person name="Robertson L."/>
            <person name="Ambridge K."/>
            <person name="Leongamornlert D."/>
            <person name="McGuire S."/>
            <person name="Gilderthorp R."/>
            <person name="Griffiths C."/>
            <person name="Manthravadi D."/>
            <person name="Nichol S."/>
            <person name="Barker G."/>
            <person name="Whitehead S."/>
            <person name="Kay M."/>
            <person name="Brown J."/>
            <person name="Murnane C."/>
            <person name="Gray E."/>
            <person name="Humphries M."/>
            <person name="Sycamore N."/>
            <person name="Barker D."/>
            <person name="Saunders D."/>
            <person name="Wallis J."/>
            <person name="Babbage A."/>
            <person name="Hammond S."/>
            <person name="Mashreghi-Mohammadi M."/>
            <person name="Barr L."/>
            <person name="Martin S."/>
            <person name="Wray P."/>
            <person name="Ellington A."/>
            <person name="Matthews N."/>
            <person name="Ellwood M."/>
            <person name="Woodmansey R."/>
            <person name="Clark G."/>
            <person name="Cooper J."/>
            <person name="Tromans A."/>
            <person name="Grafham D."/>
            <person name="Skuce C."/>
            <person name="Pandian R."/>
            <person name="Andrews R."/>
            <person name="Harrison E."/>
            <person name="Kimberley A."/>
            <person name="Garnett J."/>
            <person name="Fosker N."/>
            <person name="Hall R."/>
            <person name="Garner P."/>
            <person name="Kelly D."/>
            <person name="Bird C."/>
            <person name="Palmer S."/>
            <person name="Gehring I."/>
            <person name="Berger A."/>
            <person name="Dooley C.M."/>
            <person name="Ersan-Urun Z."/>
            <person name="Eser C."/>
            <person name="Geiger H."/>
            <person name="Geisler M."/>
            <person name="Karotki L."/>
            <person name="Kirn A."/>
            <person name="Konantz J."/>
            <person name="Konantz M."/>
            <person name="Oberlander M."/>
            <person name="Rudolph-Geiger S."/>
            <person name="Teucke M."/>
            <person name="Lanz C."/>
            <person name="Raddatz G."/>
            <person name="Osoegawa K."/>
            <person name="Zhu B."/>
            <person name="Rapp A."/>
            <person name="Widaa S."/>
            <person name="Langford C."/>
            <person name="Yang F."/>
            <person name="Schuster S.C."/>
            <person name="Carter N.P."/>
            <person name="Harrow J."/>
            <person name="Ning Z."/>
            <person name="Herrero J."/>
            <person name="Searle S.M."/>
            <person name="Enright A."/>
            <person name="Geisler R."/>
            <person name="Plasterk R.H."/>
            <person name="Lee C."/>
            <person name="Westerfield M."/>
            <person name="de Jong P.J."/>
            <person name="Zon L.I."/>
            <person name="Postlethwait J.H."/>
            <person name="Nusslein-Volhard C."/>
            <person name="Hubbard T.J."/>
            <person name="Roest Crollius H."/>
            <person name="Rogers J."/>
            <person name="Stemple D.L."/>
        </authorList>
    </citation>
    <scope>NUCLEOTIDE SEQUENCE [LARGE SCALE GENOMIC DNA]</scope>
    <source>
        <strain>Tuebingen</strain>
    </source>
</reference>
<reference key="2">
    <citation type="submission" date="2004-07" db="EMBL/GenBank/DDBJ databases">
        <authorList>
            <consortium name="NIH - Zebrafish Gene Collection (ZGC) project"/>
        </authorList>
    </citation>
    <scope>NUCLEOTIDE SEQUENCE [LARGE SCALE MRNA]</scope>
    <source>
        <tissue>Brain</tissue>
    </source>
</reference>
<comment type="function">
    <text evidence="1">Component of the AP-1 transcription factor that represses transactivation mediated by the Jun family of proteins.</text>
</comment>
<comment type="subcellular location">
    <subcellularLocation>
        <location evidence="4">Nucleus</location>
    </subcellularLocation>
</comment>
<comment type="similarity">
    <text evidence="4">Belongs to the bZIP family. ATF subfamily.</text>
</comment>
<evidence type="ECO:0000250" key="1"/>
<evidence type="ECO:0000255" key="2">
    <source>
        <dbReference type="PROSITE-ProRule" id="PRU00978"/>
    </source>
</evidence>
<evidence type="ECO:0000256" key="3">
    <source>
        <dbReference type="SAM" id="MobiDB-lite"/>
    </source>
</evidence>
<evidence type="ECO:0000305" key="4"/>
<dbReference type="EMBL" id="AL929435">
    <property type="protein sequence ID" value="CAI11631.1"/>
    <property type="molecule type" value="Genomic_DNA"/>
</dbReference>
<dbReference type="EMBL" id="BC076313">
    <property type="protein sequence ID" value="AAH76313.1"/>
    <property type="molecule type" value="mRNA"/>
</dbReference>
<dbReference type="RefSeq" id="NP_001002493.1">
    <property type="nucleotide sequence ID" value="NM_001002493.1"/>
</dbReference>
<dbReference type="RefSeq" id="XP_005160914.1">
    <property type="nucleotide sequence ID" value="XM_005160857.2"/>
</dbReference>
<dbReference type="SMR" id="Q6DGM8"/>
<dbReference type="STRING" id="7955.ENSDARP00000010866"/>
<dbReference type="PaxDb" id="7955-ENSDARP00000010866"/>
<dbReference type="Ensembl" id="ENSDART00000014166">
    <property type="protein sequence ID" value="ENSDARP00000010866"/>
    <property type="gene ID" value="ENSDARG00000020133"/>
</dbReference>
<dbReference type="Ensembl" id="ENSDART00000179266">
    <property type="protein sequence ID" value="ENSDARP00000144615"/>
    <property type="gene ID" value="ENSDARG00000020133"/>
</dbReference>
<dbReference type="GeneID" id="436766"/>
<dbReference type="KEGG" id="dre:436766"/>
<dbReference type="AGR" id="ZFIN:ZDB-GENE-040718-197"/>
<dbReference type="CTD" id="436766"/>
<dbReference type="ZFIN" id="ZDB-GENE-040718-197">
    <property type="gene designation" value="jdp2b"/>
</dbReference>
<dbReference type="eggNOG" id="KOG1414">
    <property type="taxonomic scope" value="Eukaryota"/>
</dbReference>
<dbReference type="HOGENOM" id="CLU_088612_0_1_1"/>
<dbReference type="InParanoid" id="Q6DGM8"/>
<dbReference type="OMA" id="YADIHNI"/>
<dbReference type="OrthoDB" id="2596881at2759"/>
<dbReference type="PhylomeDB" id="Q6DGM8"/>
<dbReference type="TreeFam" id="TF326301"/>
<dbReference type="PRO" id="PR:Q6DGM8"/>
<dbReference type="Proteomes" id="UP000000437">
    <property type="component" value="Chromosome 20"/>
</dbReference>
<dbReference type="Bgee" id="ENSDARG00000020133">
    <property type="expression patterns" value="Expressed in granulocyte and 23 other cell types or tissues"/>
</dbReference>
<dbReference type="GO" id="GO:0005634">
    <property type="term" value="C:nucleus"/>
    <property type="evidence" value="ECO:0000318"/>
    <property type="project" value="GO_Central"/>
</dbReference>
<dbReference type="GO" id="GO:0000981">
    <property type="term" value="F:DNA-binding transcription factor activity, RNA polymerase II-specific"/>
    <property type="evidence" value="ECO:0000318"/>
    <property type="project" value="GO_Central"/>
</dbReference>
<dbReference type="GO" id="GO:0000978">
    <property type="term" value="F:RNA polymerase II cis-regulatory region sequence-specific DNA binding"/>
    <property type="evidence" value="ECO:0000318"/>
    <property type="project" value="GO_Central"/>
</dbReference>
<dbReference type="GO" id="GO:0006357">
    <property type="term" value="P:regulation of transcription by RNA polymerase II"/>
    <property type="evidence" value="ECO:0000318"/>
    <property type="project" value="GO_Central"/>
</dbReference>
<dbReference type="CDD" id="cd14722">
    <property type="entry name" value="bZIP_ATF3"/>
    <property type="match status" value="1"/>
</dbReference>
<dbReference type="FunFam" id="1.20.5.170:FF:000006">
    <property type="entry name" value="fos-related antigen 2 isoform X1"/>
    <property type="match status" value="1"/>
</dbReference>
<dbReference type="Gene3D" id="1.20.5.170">
    <property type="match status" value="1"/>
</dbReference>
<dbReference type="InterPro" id="IPR000837">
    <property type="entry name" value="AP-1"/>
</dbReference>
<dbReference type="InterPro" id="IPR004827">
    <property type="entry name" value="bZIP"/>
</dbReference>
<dbReference type="InterPro" id="IPR046347">
    <property type="entry name" value="bZIP_sf"/>
</dbReference>
<dbReference type="PANTHER" id="PTHR23351">
    <property type="entry name" value="FOS TRANSCRIPTION FACTOR-RELATED"/>
    <property type="match status" value="1"/>
</dbReference>
<dbReference type="PANTHER" id="PTHR23351:SF10">
    <property type="entry name" value="JUN DIMERIZATION PROTEIN 2"/>
    <property type="match status" value="1"/>
</dbReference>
<dbReference type="Pfam" id="PF00170">
    <property type="entry name" value="bZIP_1"/>
    <property type="match status" value="1"/>
</dbReference>
<dbReference type="PRINTS" id="PR00042">
    <property type="entry name" value="LEUZIPPRFOS"/>
</dbReference>
<dbReference type="SMART" id="SM00338">
    <property type="entry name" value="BRLZ"/>
    <property type="match status" value="1"/>
</dbReference>
<dbReference type="SUPFAM" id="SSF57959">
    <property type="entry name" value="Leucine zipper domain"/>
    <property type="match status" value="1"/>
</dbReference>
<dbReference type="PROSITE" id="PS50217">
    <property type="entry name" value="BZIP"/>
    <property type="match status" value="1"/>
</dbReference>
<dbReference type="PROSITE" id="PS00036">
    <property type="entry name" value="BZIP_BASIC"/>
    <property type="match status" value="1"/>
</dbReference>